<reference key="1">
    <citation type="journal article" date="2009" name="J. Bacteriol.">
        <title>Complete genome sequence and comparative genome analysis of enteropathogenic Escherichia coli O127:H6 strain E2348/69.</title>
        <authorList>
            <person name="Iguchi A."/>
            <person name="Thomson N.R."/>
            <person name="Ogura Y."/>
            <person name="Saunders D."/>
            <person name="Ooka T."/>
            <person name="Henderson I.R."/>
            <person name="Harris D."/>
            <person name="Asadulghani M."/>
            <person name="Kurokawa K."/>
            <person name="Dean P."/>
            <person name="Kenny B."/>
            <person name="Quail M.A."/>
            <person name="Thurston S."/>
            <person name="Dougan G."/>
            <person name="Hayashi T."/>
            <person name="Parkhill J."/>
            <person name="Frankel G."/>
        </authorList>
    </citation>
    <scope>NUCLEOTIDE SEQUENCE [LARGE SCALE GENOMIC DNA]</scope>
    <source>
        <strain>E2348/69 / EPEC</strain>
    </source>
</reference>
<sequence>MAKNIQAIRGMNDYLPGETAIWQRIEGTLKNVLGSYGYSEIRLPIVEQTPLFKRAIGEVTDVVEKEMYTFEDRNGDSLTLRPEGTAGCVRAGIEHGLLYNQEQRLWYIGPMFRHERPQKGRYRQFHQLGCEVFGLQGPDIDAELIMLTARWWRALGISEHVTLELNSIGSLEARANYRDALVAFLEQHKEKLDEDCKRRMYTNPLRVLDSKNPEVQVLLNDAPALGDYLDEESREHFAGLCKLLESAGIAYTVNQRLVRGLDYYNRTVFEWVTNSLGSQGTVCAGGRYDGLVEQLGGRATPAVGFAMGLERLVLLVQAVNPEFKADPVVDIYLVASGADTQSAAMALAERLRDELPGVKLMTNHGGGNFKKQFARADKWGARVAVVLGESEVANGTAVVKDLRSGEQTAVAQDSVAAHLRTLLG</sequence>
<keyword id="KW-0030">Aminoacyl-tRNA synthetase</keyword>
<keyword id="KW-0067">ATP-binding</keyword>
<keyword id="KW-0963">Cytoplasm</keyword>
<keyword id="KW-0436">Ligase</keyword>
<keyword id="KW-0547">Nucleotide-binding</keyword>
<keyword id="KW-0648">Protein biosynthesis</keyword>
<keyword id="KW-1185">Reference proteome</keyword>
<organism>
    <name type="scientific">Escherichia coli O127:H6 (strain E2348/69 / EPEC)</name>
    <dbReference type="NCBI Taxonomy" id="574521"/>
    <lineage>
        <taxon>Bacteria</taxon>
        <taxon>Pseudomonadati</taxon>
        <taxon>Pseudomonadota</taxon>
        <taxon>Gammaproteobacteria</taxon>
        <taxon>Enterobacterales</taxon>
        <taxon>Enterobacteriaceae</taxon>
        <taxon>Escherichia</taxon>
    </lineage>
</organism>
<proteinExistence type="inferred from homology"/>
<feature type="chain" id="PRO_1000199131" description="Histidine--tRNA ligase">
    <location>
        <begin position="1"/>
        <end position="424"/>
    </location>
</feature>
<dbReference type="EC" id="6.1.1.21" evidence="1"/>
<dbReference type="EMBL" id="FM180568">
    <property type="protein sequence ID" value="CAS10345.1"/>
    <property type="molecule type" value="Genomic_DNA"/>
</dbReference>
<dbReference type="RefSeq" id="WP_001107179.1">
    <property type="nucleotide sequence ID" value="NC_011601.1"/>
</dbReference>
<dbReference type="SMR" id="B7UGW0"/>
<dbReference type="KEGG" id="ecg:E2348C_2797"/>
<dbReference type="HOGENOM" id="CLU_025113_1_0_6"/>
<dbReference type="Proteomes" id="UP000008205">
    <property type="component" value="Chromosome"/>
</dbReference>
<dbReference type="GO" id="GO:0005737">
    <property type="term" value="C:cytoplasm"/>
    <property type="evidence" value="ECO:0007669"/>
    <property type="project" value="UniProtKB-SubCell"/>
</dbReference>
<dbReference type="GO" id="GO:0005524">
    <property type="term" value="F:ATP binding"/>
    <property type="evidence" value="ECO:0007669"/>
    <property type="project" value="UniProtKB-UniRule"/>
</dbReference>
<dbReference type="GO" id="GO:0004821">
    <property type="term" value="F:histidine-tRNA ligase activity"/>
    <property type="evidence" value="ECO:0007669"/>
    <property type="project" value="UniProtKB-UniRule"/>
</dbReference>
<dbReference type="GO" id="GO:0006427">
    <property type="term" value="P:histidyl-tRNA aminoacylation"/>
    <property type="evidence" value="ECO:0007669"/>
    <property type="project" value="UniProtKB-UniRule"/>
</dbReference>
<dbReference type="CDD" id="cd00773">
    <property type="entry name" value="HisRS-like_core"/>
    <property type="match status" value="1"/>
</dbReference>
<dbReference type="CDD" id="cd00859">
    <property type="entry name" value="HisRS_anticodon"/>
    <property type="match status" value="1"/>
</dbReference>
<dbReference type="FunFam" id="3.30.930.10:FF:000005">
    <property type="entry name" value="Histidine--tRNA ligase"/>
    <property type="match status" value="1"/>
</dbReference>
<dbReference type="FunFam" id="3.40.50.800:FF:000007">
    <property type="entry name" value="Histidine--tRNA ligase"/>
    <property type="match status" value="1"/>
</dbReference>
<dbReference type="Gene3D" id="3.40.50.800">
    <property type="entry name" value="Anticodon-binding domain"/>
    <property type="match status" value="1"/>
</dbReference>
<dbReference type="Gene3D" id="3.30.930.10">
    <property type="entry name" value="Bira Bifunctional Protein, Domain 2"/>
    <property type="match status" value="1"/>
</dbReference>
<dbReference type="HAMAP" id="MF_00127">
    <property type="entry name" value="His_tRNA_synth"/>
    <property type="match status" value="1"/>
</dbReference>
<dbReference type="InterPro" id="IPR006195">
    <property type="entry name" value="aa-tRNA-synth_II"/>
</dbReference>
<dbReference type="InterPro" id="IPR045864">
    <property type="entry name" value="aa-tRNA-synth_II/BPL/LPL"/>
</dbReference>
<dbReference type="InterPro" id="IPR004154">
    <property type="entry name" value="Anticodon-bd"/>
</dbReference>
<dbReference type="InterPro" id="IPR036621">
    <property type="entry name" value="Anticodon-bd_dom_sf"/>
</dbReference>
<dbReference type="InterPro" id="IPR015807">
    <property type="entry name" value="His-tRNA-ligase"/>
</dbReference>
<dbReference type="InterPro" id="IPR041715">
    <property type="entry name" value="HisRS-like_core"/>
</dbReference>
<dbReference type="InterPro" id="IPR004516">
    <property type="entry name" value="HisRS/HisZ"/>
</dbReference>
<dbReference type="InterPro" id="IPR033656">
    <property type="entry name" value="HisRS_anticodon"/>
</dbReference>
<dbReference type="NCBIfam" id="TIGR00442">
    <property type="entry name" value="hisS"/>
    <property type="match status" value="1"/>
</dbReference>
<dbReference type="PANTHER" id="PTHR43707:SF1">
    <property type="entry name" value="HISTIDINE--TRNA LIGASE, MITOCHONDRIAL-RELATED"/>
    <property type="match status" value="1"/>
</dbReference>
<dbReference type="PANTHER" id="PTHR43707">
    <property type="entry name" value="HISTIDYL-TRNA SYNTHETASE"/>
    <property type="match status" value="1"/>
</dbReference>
<dbReference type="Pfam" id="PF03129">
    <property type="entry name" value="HGTP_anticodon"/>
    <property type="match status" value="1"/>
</dbReference>
<dbReference type="Pfam" id="PF13393">
    <property type="entry name" value="tRNA-synt_His"/>
    <property type="match status" value="1"/>
</dbReference>
<dbReference type="PIRSF" id="PIRSF001549">
    <property type="entry name" value="His-tRNA_synth"/>
    <property type="match status" value="1"/>
</dbReference>
<dbReference type="SUPFAM" id="SSF52954">
    <property type="entry name" value="Class II aaRS ABD-related"/>
    <property type="match status" value="1"/>
</dbReference>
<dbReference type="SUPFAM" id="SSF55681">
    <property type="entry name" value="Class II aaRS and biotin synthetases"/>
    <property type="match status" value="1"/>
</dbReference>
<dbReference type="PROSITE" id="PS50862">
    <property type="entry name" value="AA_TRNA_LIGASE_II"/>
    <property type="match status" value="1"/>
</dbReference>
<protein>
    <recommendedName>
        <fullName evidence="1">Histidine--tRNA ligase</fullName>
        <ecNumber evidence="1">6.1.1.21</ecNumber>
    </recommendedName>
    <alternativeName>
        <fullName evidence="1">Histidyl-tRNA synthetase</fullName>
        <shortName evidence="1">HisRS</shortName>
    </alternativeName>
</protein>
<gene>
    <name evidence="1" type="primary">hisS</name>
    <name type="ordered locus">E2348C_2797</name>
</gene>
<accession>B7UGW0</accession>
<name>SYH_ECO27</name>
<comment type="catalytic activity">
    <reaction evidence="1">
        <text>tRNA(His) + L-histidine + ATP = L-histidyl-tRNA(His) + AMP + diphosphate + H(+)</text>
        <dbReference type="Rhea" id="RHEA:17313"/>
        <dbReference type="Rhea" id="RHEA-COMP:9665"/>
        <dbReference type="Rhea" id="RHEA-COMP:9689"/>
        <dbReference type="ChEBI" id="CHEBI:15378"/>
        <dbReference type="ChEBI" id="CHEBI:30616"/>
        <dbReference type="ChEBI" id="CHEBI:33019"/>
        <dbReference type="ChEBI" id="CHEBI:57595"/>
        <dbReference type="ChEBI" id="CHEBI:78442"/>
        <dbReference type="ChEBI" id="CHEBI:78527"/>
        <dbReference type="ChEBI" id="CHEBI:456215"/>
        <dbReference type="EC" id="6.1.1.21"/>
    </reaction>
</comment>
<comment type="subunit">
    <text evidence="1">Homodimer.</text>
</comment>
<comment type="subcellular location">
    <subcellularLocation>
        <location evidence="1">Cytoplasm</location>
    </subcellularLocation>
</comment>
<comment type="similarity">
    <text evidence="1">Belongs to the class-II aminoacyl-tRNA synthetase family.</text>
</comment>
<evidence type="ECO:0000255" key="1">
    <source>
        <dbReference type="HAMAP-Rule" id="MF_00127"/>
    </source>
</evidence>